<protein>
    <recommendedName>
        <fullName evidence="1">4-hydroxy-tetrahydrodipicolinate synthase</fullName>
        <shortName evidence="1">HTPA synthase</shortName>
        <ecNumber evidence="1">4.3.3.7</ecNumber>
    </recommendedName>
</protein>
<gene>
    <name evidence="1" type="primary">dapA</name>
    <name type="ordered locus">P9303_00721</name>
</gene>
<dbReference type="EC" id="4.3.3.7" evidence="1"/>
<dbReference type="EMBL" id="CP000554">
    <property type="protein sequence ID" value="ABM76829.1"/>
    <property type="molecule type" value="Genomic_DNA"/>
</dbReference>
<dbReference type="RefSeq" id="WP_011824761.1">
    <property type="nucleotide sequence ID" value="NC_008820.1"/>
</dbReference>
<dbReference type="SMR" id="A2C5R9"/>
<dbReference type="STRING" id="59922.P9303_00721"/>
<dbReference type="KEGG" id="pmf:P9303_00721"/>
<dbReference type="HOGENOM" id="CLU_049343_7_1_3"/>
<dbReference type="BioCyc" id="PMAR59922:G1G80-70-MONOMER"/>
<dbReference type="UniPathway" id="UPA00034">
    <property type="reaction ID" value="UER00017"/>
</dbReference>
<dbReference type="Proteomes" id="UP000002274">
    <property type="component" value="Chromosome"/>
</dbReference>
<dbReference type="GO" id="GO:0005829">
    <property type="term" value="C:cytosol"/>
    <property type="evidence" value="ECO:0007669"/>
    <property type="project" value="TreeGrafter"/>
</dbReference>
<dbReference type="GO" id="GO:0008840">
    <property type="term" value="F:4-hydroxy-tetrahydrodipicolinate synthase activity"/>
    <property type="evidence" value="ECO:0007669"/>
    <property type="project" value="UniProtKB-UniRule"/>
</dbReference>
<dbReference type="GO" id="GO:0019877">
    <property type="term" value="P:diaminopimelate biosynthetic process"/>
    <property type="evidence" value="ECO:0007669"/>
    <property type="project" value="UniProtKB-UniRule"/>
</dbReference>
<dbReference type="GO" id="GO:0009089">
    <property type="term" value="P:lysine biosynthetic process via diaminopimelate"/>
    <property type="evidence" value="ECO:0007669"/>
    <property type="project" value="UniProtKB-UniRule"/>
</dbReference>
<dbReference type="CDD" id="cd00950">
    <property type="entry name" value="DHDPS"/>
    <property type="match status" value="1"/>
</dbReference>
<dbReference type="Gene3D" id="3.20.20.70">
    <property type="entry name" value="Aldolase class I"/>
    <property type="match status" value="1"/>
</dbReference>
<dbReference type="HAMAP" id="MF_00418">
    <property type="entry name" value="DapA"/>
    <property type="match status" value="1"/>
</dbReference>
<dbReference type="InterPro" id="IPR013785">
    <property type="entry name" value="Aldolase_TIM"/>
</dbReference>
<dbReference type="InterPro" id="IPR005263">
    <property type="entry name" value="DapA"/>
</dbReference>
<dbReference type="InterPro" id="IPR002220">
    <property type="entry name" value="DapA-like"/>
</dbReference>
<dbReference type="InterPro" id="IPR020625">
    <property type="entry name" value="Schiff_base-form_aldolases_AS"/>
</dbReference>
<dbReference type="InterPro" id="IPR020624">
    <property type="entry name" value="Schiff_base-form_aldolases_CS"/>
</dbReference>
<dbReference type="NCBIfam" id="TIGR00674">
    <property type="entry name" value="dapA"/>
    <property type="match status" value="1"/>
</dbReference>
<dbReference type="PANTHER" id="PTHR12128:SF66">
    <property type="entry name" value="4-HYDROXY-2-OXOGLUTARATE ALDOLASE, MITOCHONDRIAL"/>
    <property type="match status" value="1"/>
</dbReference>
<dbReference type="PANTHER" id="PTHR12128">
    <property type="entry name" value="DIHYDRODIPICOLINATE SYNTHASE"/>
    <property type="match status" value="1"/>
</dbReference>
<dbReference type="Pfam" id="PF00701">
    <property type="entry name" value="DHDPS"/>
    <property type="match status" value="1"/>
</dbReference>
<dbReference type="PIRSF" id="PIRSF001365">
    <property type="entry name" value="DHDPS"/>
    <property type="match status" value="1"/>
</dbReference>
<dbReference type="PRINTS" id="PR00146">
    <property type="entry name" value="DHPICSNTHASE"/>
</dbReference>
<dbReference type="SMART" id="SM01130">
    <property type="entry name" value="DHDPS"/>
    <property type="match status" value="1"/>
</dbReference>
<dbReference type="SUPFAM" id="SSF51569">
    <property type="entry name" value="Aldolase"/>
    <property type="match status" value="1"/>
</dbReference>
<dbReference type="PROSITE" id="PS00665">
    <property type="entry name" value="DHDPS_1"/>
    <property type="match status" value="1"/>
</dbReference>
<dbReference type="PROSITE" id="PS00666">
    <property type="entry name" value="DHDPS_2"/>
    <property type="match status" value="1"/>
</dbReference>
<reference key="1">
    <citation type="journal article" date="2007" name="PLoS Genet.">
        <title>Patterns and implications of gene gain and loss in the evolution of Prochlorococcus.</title>
        <authorList>
            <person name="Kettler G.C."/>
            <person name="Martiny A.C."/>
            <person name="Huang K."/>
            <person name="Zucker J."/>
            <person name="Coleman M.L."/>
            <person name="Rodrigue S."/>
            <person name="Chen F."/>
            <person name="Lapidus A."/>
            <person name="Ferriera S."/>
            <person name="Johnson J."/>
            <person name="Steglich C."/>
            <person name="Church G.M."/>
            <person name="Richardson P."/>
            <person name="Chisholm S.W."/>
        </authorList>
    </citation>
    <scope>NUCLEOTIDE SEQUENCE [LARGE SCALE GENOMIC DNA]</scope>
    <source>
        <strain>MIT 9303</strain>
    </source>
</reference>
<feature type="chain" id="PRO_1000050241" description="4-hydroxy-tetrahydrodipicolinate synthase">
    <location>
        <begin position="1"/>
        <end position="302"/>
    </location>
</feature>
<feature type="active site" description="Proton donor/acceptor" evidence="1">
    <location>
        <position position="144"/>
    </location>
</feature>
<feature type="active site" description="Schiff-base intermediate with substrate" evidence="1">
    <location>
        <position position="172"/>
    </location>
</feature>
<feature type="binding site" evidence="1">
    <location>
        <position position="55"/>
    </location>
    <ligand>
        <name>pyruvate</name>
        <dbReference type="ChEBI" id="CHEBI:15361"/>
    </ligand>
</feature>
<feature type="binding site" evidence="1">
    <location>
        <position position="214"/>
    </location>
    <ligand>
        <name>pyruvate</name>
        <dbReference type="ChEBI" id="CHEBI:15361"/>
    </ligand>
</feature>
<feature type="site" description="Part of a proton relay during catalysis" evidence="1">
    <location>
        <position position="54"/>
    </location>
</feature>
<feature type="site" description="Part of a proton relay during catalysis" evidence="1">
    <location>
        <position position="117"/>
    </location>
</feature>
<accession>A2C5R9</accession>
<proteinExistence type="inferred from homology"/>
<organism>
    <name type="scientific">Prochlorococcus marinus (strain MIT 9303)</name>
    <dbReference type="NCBI Taxonomy" id="59922"/>
    <lineage>
        <taxon>Bacteria</taxon>
        <taxon>Bacillati</taxon>
        <taxon>Cyanobacteriota</taxon>
        <taxon>Cyanophyceae</taxon>
        <taxon>Synechococcales</taxon>
        <taxon>Prochlorococcaceae</taxon>
        <taxon>Prochlorococcus</taxon>
    </lineage>
</organism>
<evidence type="ECO:0000255" key="1">
    <source>
        <dbReference type="HAMAP-Rule" id="MF_00418"/>
    </source>
</evidence>
<evidence type="ECO:0000305" key="2"/>
<keyword id="KW-0028">Amino-acid biosynthesis</keyword>
<keyword id="KW-0963">Cytoplasm</keyword>
<keyword id="KW-0220">Diaminopimelate biosynthesis</keyword>
<keyword id="KW-0456">Lyase</keyword>
<keyword id="KW-0457">Lysine biosynthesis</keyword>
<keyword id="KW-0704">Schiff base</keyword>
<name>DAPA_PROM3</name>
<sequence length="302" mass="31379">MSSAAESSPTPFGRLLTAMVTPFDADGCVDLALAGRLARYLVDEGSDGLVVCGTTGESPTLSWQEQHQLLGVVRQAVGPGVKVLAGTGSNSTAEAIEATTQAAAVGADGALVVVPYYNKPPQEGLEAHFRAIAQAAPELPLMLYNIPGRTGCSLAPATVARLMECPNVVSFKAASGTTDEVTQLRLQCGSKLAVYSGDDGLLLPMMSVGAVGVVSVASHLVGRRLKAMIEAYLNGQGALALSYHEQLQPLFKALFVTTNPIPVKAALELSGWPVGSPRLPLLPLDPVMRDALSNTLTALCQT</sequence>
<comment type="function">
    <text evidence="1">Catalyzes the condensation of (S)-aspartate-beta-semialdehyde [(S)-ASA] and pyruvate to 4-hydroxy-tetrahydrodipicolinate (HTPA).</text>
</comment>
<comment type="catalytic activity">
    <reaction evidence="1">
        <text>L-aspartate 4-semialdehyde + pyruvate = (2S,4S)-4-hydroxy-2,3,4,5-tetrahydrodipicolinate + H2O + H(+)</text>
        <dbReference type="Rhea" id="RHEA:34171"/>
        <dbReference type="ChEBI" id="CHEBI:15361"/>
        <dbReference type="ChEBI" id="CHEBI:15377"/>
        <dbReference type="ChEBI" id="CHEBI:15378"/>
        <dbReference type="ChEBI" id="CHEBI:67139"/>
        <dbReference type="ChEBI" id="CHEBI:537519"/>
        <dbReference type="EC" id="4.3.3.7"/>
    </reaction>
</comment>
<comment type="pathway">
    <text evidence="1">Amino-acid biosynthesis; L-lysine biosynthesis via DAP pathway; (S)-tetrahydrodipicolinate from L-aspartate: step 3/4.</text>
</comment>
<comment type="subunit">
    <text evidence="1">Homotetramer; dimer of dimers.</text>
</comment>
<comment type="subcellular location">
    <subcellularLocation>
        <location evidence="1">Cytoplasm</location>
    </subcellularLocation>
</comment>
<comment type="similarity">
    <text evidence="1">Belongs to the DapA family.</text>
</comment>
<comment type="caution">
    <text evidence="2">Was originally thought to be a dihydrodipicolinate synthase (DHDPS), catalyzing the condensation of (S)-aspartate-beta-semialdehyde [(S)-ASA] and pyruvate to dihydrodipicolinate (DHDP). However, it was shown in E.coli that the product of the enzymatic reaction is not dihydrodipicolinate but in fact (4S)-4-hydroxy-2,3,4,5-tetrahydro-(2S)-dipicolinic acid (HTPA), and that the consecutive dehydration reaction leading to DHDP is not spontaneous but catalyzed by DapB.</text>
</comment>